<sequence>MAQGGQVSAGGGRRDDDEPIEQTSGAGTQQVNVTGTDDLLDEIDGLLENNAEEFVRSYVQKGGQ</sequence>
<comment type="function">
    <text evidence="1">Protein modifier that is covalently attached to lysine residues of substrate proteins, thereby targeting them for proteasomal degradation. The tagging system is termed pupylation.</text>
</comment>
<comment type="pathway">
    <text evidence="1">Protein degradation; proteasomal Pup-dependent pathway.</text>
</comment>
<comment type="subunit">
    <text evidence="1">Strongly interacts with the proteasome-associated ATPase ARC through a hydrophobic interface; the interacting region of Pup lies in its C-terminal half. There is one Pup binding site per ARC hexamer ring.</text>
</comment>
<comment type="domain">
    <text evidence="1">The N-terminal unstructured half of Pup provides a signal required to initiate unfolding and degradation by the proteasome but is not needed for pupylation, while the C-terminal helical half of Pup interacts with ARC to target proteins to the proteasome.</text>
</comment>
<comment type="PTM">
    <text evidence="1">Is modified by deamidation of its C-terminal glutamine to glutamate by the deamidase Dop, a prerequisite to the subsequent pupylation process.</text>
</comment>
<comment type="similarity">
    <text evidence="1">Belongs to the prokaryotic ubiquitin-like protein family.</text>
</comment>
<accession>Q4JVP7</accession>
<reference key="1">
    <citation type="journal article" date="2005" name="J. Bacteriol.">
        <title>Complete genome sequence and analysis of the multiresistant nosocomial pathogen Corynebacterium jeikeium K411, a lipid-requiring bacterium of the human skin flora.</title>
        <authorList>
            <person name="Tauch A."/>
            <person name="Kaiser O."/>
            <person name="Hain T."/>
            <person name="Goesmann A."/>
            <person name="Weisshaar B."/>
            <person name="Albersmeier A."/>
            <person name="Bekel T."/>
            <person name="Bischoff N."/>
            <person name="Brune I."/>
            <person name="Chakraborty T."/>
            <person name="Kalinowski J."/>
            <person name="Meyer F."/>
            <person name="Rupp O."/>
            <person name="Schneiker S."/>
            <person name="Viehoever P."/>
            <person name="Puehler A."/>
        </authorList>
    </citation>
    <scope>NUCLEOTIDE SEQUENCE [LARGE SCALE GENOMIC DNA]</scope>
    <source>
        <strain>K411</strain>
    </source>
</reference>
<protein>
    <recommendedName>
        <fullName evidence="1">Prokaryotic ubiquitin-like protein Pup</fullName>
    </recommendedName>
    <alternativeName>
        <fullName evidence="1">Bacterial ubiquitin-like modifier</fullName>
    </alternativeName>
</protein>
<name>PUP_CORJK</name>
<proteinExistence type="inferred from homology"/>
<dbReference type="EMBL" id="CR931997">
    <property type="protein sequence ID" value="CAI37110.1"/>
    <property type="molecule type" value="Genomic_DNA"/>
</dbReference>
<dbReference type="RefSeq" id="WP_005294680.1">
    <property type="nucleotide sequence ID" value="NC_007164.1"/>
</dbReference>
<dbReference type="SMR" id="Q4JVP7"/>
<dbReference type="STRING" id="306537.jk0946"/>
<dbReference type="GeneID" id="92738459"/>
<dbReference type="KEGG" id="cjk:jk0946"/>
<dbReference type="eggNOG" id="ENOG5033BS6">
    <property type="taxonomic scope" value="Bacteria"/>
</dbReference>
<dbReference type="HOGENOM" id="CLU_183816_1_0_11"/>
<dbReference type="OrthoDB" id="3254977at2"/>
<dbReference type="UniPathway" id="UPA00997"/>
<dbReference type="Proteomes" id="UP000000545">
    <property type="component" value="Chromosome"/>
</dbReference>
<dbReference type="GO" id="GO:0070628">
    <property type="term" value="F:proteasome binding"/>
    <property type="evidence" value="ECO:0007669"/>
    <property type="project" value="UniProtKB-UniRule"/>
</dbReference>
<dbReference type="GO" id="GO:0031386">
    <property type="term" value="F:protein tag activity"/>
    <property type="evidence" value="ECO:0007669"/>
    <property type="project" value="UniProtKB-UniRule"/>
</dbReference>
<dbReference type="GO" id="GO:0019941">
    <property type="term" value="P:modification-dependent protein catabolic process"/>
    <property type="evidence" value="ECO:0007669"/>
    <property type="project" value="UniProtKB-UniRule"/>
</dbReference>
<dbReference type="GO" id="GO:0010498">
    <property type="term" value="P:proteasomal protein catabolic process"/>
    <property type="evidence" value="ECO:0007669"/>
    <property type="project" value="UniProtKB-UniRule"/>
</dbReference>
<dbReference type="GO" id="GO:0070490">
    <property type="term" value="P:protein pupylation"/>
    <property type="evidence" value="ECO:0007669"/>
    <property type="project" value="UniProtKB-UniRule"/>
</dbReference>
<dbReference type="HAMAP" id="MF_02106">
    <property type="entry name" value="Pup"/>
    <property type="match status" value="1"/>
</dbReference>
<dbReference type="InterPro" id="IPR008515">
    <property type="entry name" value="Ubiquitin-like_Pup"/>
</dbReference>
<dbReference type="NCBIfam" id="TIGR03687">
    <property type="entry name" value="pupylate_cterm"/>
    <property type="match status" value="1"/>
</dbReference>
<dbReference type="Pfam" id="PF05639">
    <property type="entry name" value="Pup"/>
    <property type="match status" value="1"/>
</dbReference>
<gene>
    <name evidence="1" type="primary">pup</name>
    <name type="ordered locus">jk0946</name>
</gene>
<evidence type="ECO:0000255" key="1">
    <source>
        <dbReference type="HAMAP-Rule" id="MF_02106"/>
    </source>
</evidence>
<evidence type="ECO:0000256" key="2">
    <source>
        <dbReference type="SAM" id="MobiDB-lite"/>
    </source>
</evidence>
<feature type="chain" id="PRO_0000390578" description="Prokaryotic ubiquitin-like protein Pup">
    <location>
        <begin position="1"/>
        <end position="64"/>
    </location>
</feature>
<feature type="region of interest" description="Disordered" evidence="2">
    <location>
        <begin position="1"/>
        <end position="35"/>
    </location>
</feature>
<feature type="region of interest" description="ARC ATPase binding" evidence="1">
    <location>
        <begin position="21"/>
        <end position="58"/>
    </location>
</feature>
<feature type="compositionally biased region" description="Polar residues" evidence="2">
    <location>
        <begin position="21"/>
        <end position="33"/>
    </location>
</feature>
<feature type="modified residue" description="Deamidated glutamine" evidence="1">
    <location>
        <position position="64"/>
    </location>
</feature>
<feature type="cross-link" description="Isoglutamyl lysine isopeptide (Gln-Lys) (interchain with K-? in acceptor proteins)" evidence="1">
    <location>
        <position position="64"/>
    </location>
</feature>
<keyword id="KW-1017">Isopeptide bond</keyword>
<keyword id="KW-1185">Reference proteome</keyword>
<keyword id="KW-0833">Ubl conjugation pathway</keyword>
<organism>
    <name type="scientific">Corynebacterium jeikeium (strain K411)</name>
    <dbReference type="NCBI Taxonomy" id="306537"/>
    <lineage>
        <taxon>Bacteria</taxon>
        <taxon>Bacillati</taxon>
        <taxon>Actinomycetota</taxon>
        <taxon>Actinomycetes</taxon>
        <taxon>Mycobacteriales</taxon>
        <taxon>Corynebacteriaceae</taxon>
        <taxon>Corynebacterium</taxon>
    </lineage>
</organism>